<accession>Q9ERE2</accession>
<accession>E9QLY5</accession>
<sequence length="481" mass="52863">MTCGSGFCGRAFSCASACGPRPGRCCISAAPYRGISCYRGLSGGFGSQSVCGAFRSGSCGRSFGYRSGGICGPSPPCITTVSVNESLLTPLNLEIDPNAQCVKHEEKEQIKCLNSKFAAFIDKVRFLEQQNKLLETKWQFYQNRKCCESNMEPLFEGYIEALRREAECVEADSGRLAAELNHAQESMEGYKKRYEEEVSLRATAENEFVALKKDVDCAYLRKSDLEANAEALTQETDFLRRMYDEETRILHSHISDTSIVVKMDNSRDLNMDCVVAEIKAQYDDIASRSRAEAESWYRTKCEEIKATVIRHGETLRRTREEINELNRMIQRLTAEIENAKCQNTKLEAAVTQSEQQGEAALADARCKLAELEGALQKAKQDMACLLKEYQEVMNSKLGLDVEITTYRRLLEGEEQRLCEGVGAVNVCVSSSRGGVVCGDLCVSGSRPVIGSACSAPCSGNLAVNTGLCAPCGSAVSCGRKC</sequence>
<protein>
    <recommendedName>
        <fullName evidence="3">Keratin, type II cuticular Hb1</fullName>
    </recommendedName>
    <alternativeName>
        <fullName evidence="6">Keratin-81</fullName>
        <shortName>K81</shortName>
    </alternativeName>
    <alternativeName>
        <fullName>Type II hair keratin Hb1</fullName>
    </alternativeName>
</protein>
<name>KRT81_MOUSE</name>
<comment type="subunit">
    <text evidence="7">Heterotetramer of two type I and two type II keratins.</text>
</comment>
<comment type="tissue specificity">
    <text evidence="5">Expressed in dorsal skin.</text>
</comment>
<comment type="miscellaneous">
    <text evidence="7">There are two types of hair/microfibrillar keratin, I (acidic) and II (neutral to basic).</text>
</comment>
<comment type="similarity">
    <text evidence="4">Belongs to the intermediate filament family.</text>
</comment>
<evidence type="ECO:0000250" key="1"/>
<evidence type="ECO:0000250" key="2">
    <source>
        <dbReference type="UniProtKB" id="P78386"/>
    </source>
</evidence>
<evidence type="ECO:0000250" key="3">
    <source>
        <dbReference type="UniProtKB" id="Q14533"/>
    </source>
</evidence>
<evidence type="ECO:0000255" key="4">
    <source>
        <dbReference type="PROSITE-ProRule" id="PRU01188"/>
    </source>
</evidence>
<evidence type="ECO:0000269" key="5">
    <source>
    </source>
</evidence>
<evidence type="ECO:0000303" key="6">
    <source>
    </source>
</evidence>
<evidence type="ECO:0000305" key="7"/>
<evidence type="ECO:0000312" key="8">
    <source>
        <dbReference type="EMBL" id="AAG34120.1"/>
    </source>
</evidence>
<evidence type="ECO:0000312" key="9">
    <source>
        <dbReference type="MGI" id="MGI:1928858"/>
    </source>
</evidence>
<proteinExistence type="evidence at transcript level"/>
<reference key="1">
    <citation type="journal article" date="2009" name="PLoS Biol.">
        <title>Lineage-specific biology revealed by a finished genome assembly of the mouse.</title>
        <authorList>
            <person name="Church D.M."/>
            <person name="Goodstadt L."/>
            <person name="Hillier L.W."/>
            <person name="Zody M.C."/>
            <person name="Goldstein S."/>
            <person name="She X."/>
            <person name="Bult C.J."/>
            <person name="Agarwala R."/>
            <person name="Cherry J.L."/>
            <person name="DiCuccio M."/>
            <person name="Hlavina W."/>
            <person name="Kapustin Y."/>
            <person name="Meric P."/>
            <person name="Maglott D."/>
            <person name="Birtle Z."/>
            <person name="Marques A.C."/>
            <person name="Graves T."/>
            <person name="Zhou S."/>
            <person name="Teague B."/>
            <person name="Potamousis K."/>
            <person name="Churas C."/>
            <person name="Place M."/>
            <person name="Herschleb J."/>
            <person name="Runnheim R."/>
            <person name="Forrest D."/>
            <person name="Amos-Landgraf J."/>
            <person name="Schwartz D.C."/>
            <person name="Cheng Z."/>
            <person name="Lindblad-Toh K."/>
            <person name="Eichler E.E."/>
            <person name="Ponting C.P."/>
        </authorList>
    </citation>
    <scope>NUCLEOTIDE SEQUENCE [LARGE SCALE GENOMIC DNA]</scope>
    <source>
        <strain>C57BL/6J</strain>
    </source>
</reference>
<reference evidence="7 8" key="2">
    <citation type="journal article" date="2002" name="Genetics">
        <title>Hague (Hag): a new mouse hair mutation with an unstable semidominant allele.</title>
        <authorList>
            <person name="Poirier C."/>
            <person name="Yoshiki A."/>
            <person name="Fujiwara K."/>
            <person name="Guenet J.-L."/>
            <person name="Kusakabe M."/>
        </authorList>
    </citation>
    <scope>NUCLEOTIDE SEQUENCE [MRNA] OF 92-481</scope>
    <scope>TISSUE SPECIFICITY</scope>
    <source>
        <strain evidence="8">C3H/HeN</strain>
        <tissue evidence="5">Dorsal skin</tissue>
    </source>
</reference>
<feature type="chain" id="PRO_0000361690" description="Keratin, type II cuticular Hb1">
    <location>
        <begin position="1"/>
        <end position="481"/>
    </location>
</feature>
<feature type="domain" description="IF rod" evidence="4">
    <location>
        <begin position="106"/>
        <end position="417"/>
    </location>
</feature>
<feature type="region of interest" description="Head" evidence="1">
    <location>
        <begin position="1"/>
        <end position="106"/>
    </location>
</feature>
<feature type="region of interest" description="Coil 1A" evidence="1">
    <location>
        <begin position="107"/>
        <end position="141"/>
    </location>
</feature>
<feature type="region of interest" description="Linker 1" evidence="1">
    <location>
        <begin position="142"/>
        <end position="151"/>
    </location>
</feature>
<feature type="region of interest" description="Coil 1B" evidence="1">
    <location>
        <begin position="152"/>
        <end position="252"/>
    </location>
</feature>
<feature type="region of interest" description="Linker 12" evidence="1">
    <location>
        <begin position="253"/>
        <end position="269"/>
    </location>
</feature>
<feature type="region of interest" description="Coil 2" evidence="1">
    <location>
        <begin position="270"/>
        <end position="413"/>
    </location>
</feature>
<feature type="region of interest" description="Tail" evidence="1">
    <location>
        <begin position="414"/>
        <end position="481"/>
    </location>
</feature>
<feature type="cross-link" description="Glycyl lysine isopeptide (Lys-Gly) (interchain with G-Cter in SUMO1)" evidence="2">
    <location>
        <position position="212"/>
    </location>
</feature>
<dbReference type="EMBL" id="AC103674">
    <property type="status" value="NOT_ANNOTATED_CDS"/>
    <property type="molecule type" value="Genomic_DNA"/>
</dbReference>
<dbReference type="EMBL" id="AC157583">
    <property type="status" value="NOT_ANNOTATED_CDS"/>
    <property type="molecule type" value="Genomic_DNA"/>
</dbReference>
<dbReference type="EMBL" id="AF312018">
    <property type="protein sequence ID" value="AAG34120.1"/>
    <property type="molecule type" value="mRNA"/>
</dbReference>
<dbReference type="CCDS" id="CCDS49734.1"/>
<dbReference type="RefSeq" id="NP_001159629.1">
    <property type="nucleotide sequence ID" value="NM_001166157.1"/>
</dbReference>
<dbReference type="SMR" id="Q9ERE2"/>
<dbReference type="BioGRID" id="211105">
    <property type="interactions" value="6"/>
</dbReference>
<dbReference type="FunCoup" id="Q9ERE2">
    <property type="interactions" value="49"/>
</dbReference>
<dbReference type="STRING" id="10090.ENSMUSP00000056525"/>
<dbReference type="GlyGen" id="Q9ERE2">
    <property type="glycosylation" value="1 site, 1 O-linked glycan (1 site)"/>
</dbReference>
<dbReference type="iPTMnet" id="Q9ERE2"/>
<dbReference type="PhosphoSitePlus" id="Q9ERE2"/>
<dbReference type="jPOST" id="Q9ERE2"/>
<dbReference type="PaxDb" id="10090-ENSMUSP00000056525"/>
<dbReference type="PeptideAtlas" id="Q9ERE2"/>
<dbReference type="ProteomicsDB" id="263678"/>
<dbReference type="DNASU" id="64818"/>
<dbReference type="Ensembl" id="ENSMUST00000061185.8">
    <property type="protein sequence ID" value="ENSMUSP00000056525.7"/>
    <property type="gene ID" value="ENSMUSG00000067615.5"/>
</dbReference>
<dbReference type="GeneID" id="64818"/>
<dbReference type="KEGG" id="mmu:64818"/>
<dbReference type="UCSC" id="uc007xth.2">
    <property type="organism name" value="mouse"/>
</dbReference>
<dbReference type="AGR" id="MGI:1928858"/>
<dbReference type="CTD" id="3887"/>
<dbReference type="MGI" id="MGI:1928858">
    <property type="gene designation" value="Krt81"/>
</dbReference>
<dbReference type="VEuPathDB" id="HostDB:ENSMUSG00000067615"/>
<dbReference type="eggNOG" id="ENOG502SKJW">
    <property type="taxonomic scope" value="Eukaryota"/>
</dbReference>
<dbReference type="GeneTree" id="ENSGT00940000154026"/>
<dbReference type="HOGENOM" id="CLU_012560_5_0_1"/>
<dbReference type="InParanoid" id="Q9ERE2"/>
<dbReference type="OMA" id="CCESHLE"/>
<dbReference type="OrthoDB" id="2441647at2759"/>
<dbReference type="PhylomeDB" id="Q9ERE2"/>
<dbReference type="TreeFam" id="TF317854"/>
<dbReference type="Reactome" id="R-MMU-6805567">
    <property type="pathway name" value="Keratinization"/>
</dbReference>
<dbReference type="Reactome" id="R-MMU-6809371">
    <property type="pathway name" value="Formation of the cornified envelope"/>
</dbReference>
<dbReference type="BioGRID-ORCS" id="64818">
    <property type="hits" value="1 hit in 78 CRISPR screens"/>
</dbReference>
<dbReference type="ChiTaRS" id="Krt81">
    <property type="organism name" value="mouse"/>
</dbReference>
<dbReference type="PRO" id="PR:Q9ERE2"/>
<dbReference type="Proteomes" id="UP000000589">
    <property type="component" value="Chromosome 15"/>
</dbReference>
<dbReference type="RNAct" id="Q9ERE2">
    <property type="molecule type" value="protein"/>
</dbReference>
<dbReference type="Bgee" id="ENSMUSG00000067615">
    <property type="expression patterns" value="Expressed in lip and 43 other cell types or tissues"/>
</dbReference>
<dbReference type="GO" id="GO:0045095">
    <property type="term" value="C:keratin filament"/>
    <property type="evidence" value="ECO:0007669"/>
    <property type="project" value="InterPro"/>
</dbReference>
<dbReference type="FunFam" id="1.20.5.1160:FF:000001">
    <property type="entry name" value="Keratin type II"/>
    <property type="match status" value="1"/>
</dbReference>
<dbReference type="FunFam" id="1.20.5.170:FF:000004">
    <property type="entry name" value="Keratin, type II cytoskeletal 5"/>
    <property type="match status" value="1"/>
</dbReference>
<dbReference type="FunFam" id="1.20.5.500:FF:000001">
    <property type="entry name" value="Type II keratin 23"/>
    <property type="match status" value="1"/>
</dbReference>
<dbReference type="Gene3D" id="1.20.5.170">
    <property type="match status" value="1"/>
</dbReference>
<dbReference type="Gene3D" id="1.20.5.500">
    <property type="entry name" value="Single helix bin"/>
    <property type="match status" value="1"/>
</dbReference>
<dbReference type="Gene3D" id="1.20.5.1160">
    <property type="entry name" value="Vasodilator-stimulated phosphoprotein"/>
    <property type="match status" value="1"/>
</dbReference>
<dbReference type="InterPro" id="IPR018039">
    <property type="entry name" value="IF_conserved"/>
</dbReference>
<dbReference type="InterPro" id="IPR039008">
    <property type="entry name" value="IF_rod_dom"/>
</dbReference>
<dbReference type="InterPro" id="IPR032444">
    <property type="entry name" value="Keratin_2_head"/>
</dbReference>
<dbReference type="InterPro" id="IPR003054">
    <property type="entry name" value="Keratin_II"/>
</dbReference>
<dbReference type="PANTHER" id="PTHR45616">
    <property type="entry name" value="GATA-TYPE DOMAIN-CONTAINING PROTEIN"/>
    <property type="match status" value="1"/>
</dbReference>
<dbReference type="PANTHER" id="PTHR45616:SF52">
    <property type="entry name" value="KERATIN, TYPE II CUTICULAR HB3"/>
    <property type="match status" value="1"/>
</dbReference>
<dbReference type="Pfam" id="PF00038">
    <property type="entry name" value="Filament"/>
    <property type="match status" value="1"/>
</dbReference>
<dbReference type="Pfam" id="PF16208">
    <property type="entry name" value="Keratin_2_head"/>
    <property type="match status" value="1"/>
</dbReference>
<dbReference type="PRINTS" id="PR01276">
    <property type="entry name" value="TYPE2KERATIN"/>
</dbReference>
<dbReference type="SMART" id="SM01391">
    <property type="entry name" value="Filament"/>
    <property type="match status" value="1"/>
</dbReference>
<dbReference type="SUPFAM" id="SSF64593">
    <property type="entry name" value="Intermediate filament protein, coiled coil region"/>
    <property type="match status" value="2"/>
</dbReference>
<dbReference type="PROSITE" id="PS00226">
    <property type="entry name" value="IF_ROD_1"/>
    <property type="match status" value="1"/>
</dbReference>
<dbReference type="PROSITE" id="PS51842">
    <property type="entry name" value="IF_ROD_2"/>
    <property type="match status" value="1"/>
</dbReference>
<organism>
    <name type="scientific">Mus musculus</name>
    <name type="common">Mouse</name>
    <dbReference type="NCBI Taxonomy" id="10090"/>
    <lineage>
        <taxon>Eukaryota</taxon>
        <taxon>Metazoa</taxon>
        <taxon>Chordata</taxon>
        <taxon>Craniata</taxon>
        <taxon>Vertebrata</taxon>
        <taxon>Euteleostomi</taxon>
        <taxon>Mammalia</taxon>
        <taxon>Eutheria</taxon>
        <taxon>Euarchontoglires</taxon>
        <taxon>Glires</taxon>
        <taxon>Rodentia</taxon>
        <taxon>Myomorpha</taxon>
        <taxon>Muroidea</taxon>
        <taxon>Muridae</taxon>
        <taxon>Murinae</taxon>
        <taxon>Mus</taxon>
        <taxon>Mus</taxon>
    </lineage>
</organism>
<keyword id="KW-0175">Coiled coil</keyword>
<keyword id="KW-0403">Intermediate filament</keyword>
<keyword id="KW-1017">Isopeptide bond</keyword>
<keyword id="KW-0416">Keratin</keyword>
<keyword id="KW-1185">Reference proteome</keyword>
<keyword id="KW-0832">Ubl conjugation</keyword>
<gene>
    <name evidence="9" type="primary">Krt81</name>
    <name evidence="9" type="synonym">Krt2-19</name>
</gene>